<sequence length="146" mass="15515">MAIELHDLKPAPGAHKAKTRVGRGEGSKGKTAGRGTKGTGARKNVPEFFAGGQMPIHMQAPKLGGFHNPFRTEYQVVNLDKVEALFPKGGKITVDDLVSVGAVRDNELVKVLGTGELTVKVDLVVDAWSKSAQEKIEKAGGSVTKR</sequence>
<protein>
    <recommendedName>
        <fullName evidence="1">Large ribosomal subunit protein uL15</fullName>
    </recommendedName>
    <alternativeName>
        <fullName evidence="3">50S ribosomal protein L15</fullName>
    </alternativeName>
</protein>
<accession>Q6A6P5</accession>
<organism>
    <name type="scientific">Cutibacterium acnes (strain DSM 16379 / KPA171202)</name>
    <name type="common">Propionibacterium acnes</name>
    <dbReference type="NCBI Taxonomy" id="267747"/>
    <lineage>
        <taxon>Bacteria</taxon>
        <taxon>Bacillati</taxon>
        <taxon>Actinomycetota</taxon>
        <taxon>Actinomycetes</taxon>
        <taxon>Propionibacteriales</taxon>
        <taxon>Propionibacteriaceae</taxon>
        <taxon>Cutibacterium</taxon>
    </lineage>
</organism>
<name>RL15_CUTAK</name>
<feature type="chain" id="PRO_0000251541" description="Large ribosomal subunit protein uL15">
    <location>
        <begin position="1"/>
        <end position="146"/>
    </location>
</feature>
<feature type="region of interest" description="Disordered" evidence="2">
    <location>
        <begin position="1"/>
        <end position="46"/>
    </location>
</feature>
<feature type="compositionally biased region" description="Low complexity" evidence="2">
    <location>
        <begin position="29"/>
        <end position="43"/>
    </location>
</feature>
<feature type="helix" evidence="4">
    <location>
        <begin position="5"/>
        <end position="7"/>
    </location>
</feature>
<feature type="turn" evidence="4">
    <location>
        <begin position="30"/>
        <end position="33"/>
    </location>
</feature>
<feature type="strand" evidence="4">
    <location>
        <begin position="36"/>
        <end position="39"/>
    </location>
</feature>
<feature type="turn" evidence="4">
    <location>
        <begin position="40"/>
        <end position="42"/>
    </location>
</feature>
<feature type="helix" evidence="4">
    <location>
        <begin position="56"/>
        <end position="59"/>
    </location>
</feature>
<feature type="helix" evidence="4">
    <location>
        <begin position="79"/>
        <end position="85"/>
    </location>
</feature>
<feature type="turn" evidence="4">
    <location>
        <begin position="87"/>
        <end position="89"/>
    </location>
</feature>
<feature type="helix" evidence="4">
    <location>
        <begin position="95"/>
        <end position="101"/>
    </location>
</feature>
<feature type="strand" evidence="4">
    <location>
        <begin position="105"/>
        <end position="108"/>
    </location>
</feature>
<feature type="helix" evidence="4">
    <location>
        <begin position="130"/>
        <end position="139"/>
    </location>
</feature>
<reference key="1">
    <citation type="journal article" date="2004" name="Science">
        <title>The complete genome sequence of Propionibacterium acnes, a commensal of human skin.</title>
        <authorList>
            <person name="Brueggemann H."/>
            <person name="Henne A."/>
            <person name="Hoster F."/>
            <person name="Liesegang H."/>
            <person name="Wiezer A."/>
            <person name="Strittmatter A."/>
            <person name="Hujer S."/>
            <person name="Duerre P."/>
            <person name="Gottschalk G."/>
        </authorList>
    </citation>
    <scope>NUCLEOTIDE SEQUENCE [LARGE SCALE GENOMIC DNA]</scope>
    <source>
        <strain>DSM 16379 / KPA171202</strain>
    </source>
</reference>
<dbReference type="EMBL" id="AE017283">
    <property type="protein sequence ID" value="AAT83568.1"/>
    <property type="molecule type" value="Genomic_DNA"/>
</dbReference>
<dbReference type="RefSeq" id="WP_002516008.1">
    <property type="nucleotide sequence ID" value="NZ_CP025935.1"/>
</dbReference>
<dbReference type="PDB" id="8CRX">
    <property type="method" value="EM"/>
    <property type="resolution" value="2.78 A"/>
    <property type="chains" value="k=1-146"/>
</dbReference>
<dbReference type="PDB" id="8CVM">
    <property type="method" value="EM"/>
    <property type="resolution" value="2.66 A"/>
    <property type="chains" value="k=1-146"/>
</dbReference>
<dbReference type="PDBsum" id="8CRX"/>
<dbReference type="PDBsum" id="8CVM"/>
<dbReference type="SMR" id="Q6A6P5"/>
<dbReference type="EnsemblBacteria" id="AAT83568">
    <property type="protein sequence ID" value="AAT83568"/>
    <property type="gene ID" value="PPA1842"/>
</dbReference>
<dbReference type="GeneID" id="92857791"/>
<dbReference type="KEGG" id="pac:PPA1842"/>
<dbReference type="eggNOG" id="COG0200">
    <property type="taxonomic scope" value="Bacteria"/>
</dbReference>
<dbReference type="HOGENOM" id="CLU_055188_4_1_11"/>
<dbReference type="Proteomes" id="UP000000603">
    <property type="component" value="Chromosome"/>
</dbReference>
<dbReference type="GO" id="GO:0022625">
    <property type="term" value="C:cytosolic large ribosomal subunit"/>
    <property type="evidence" value="ECO:0007669"/>
    <property type="project" value="TreeGrafter"/>
</dbReference>
<dbReference type="GO" id="GO:0019843">
    <property type="term" value="F:rRNA binding"/>
    <property type="evidence" value="ECO:0007669"/>
    <property type="project" value="UniProtKB-UniRule"/>
</dbReference>
<dbReference type="GO" id="GO:0003735">
    <property type="term" value="F:structural constituent of ribosome"/>
    <property type="evidence" value="ECO:0007669"/>
    <property type="project" value="InterPro"/>
</dbReference>
<dbReference type="GO" id="GO:0006412">
    <property type="term" value="P:translation"/>
    <property type="evidence" value="ECO:0007669"/>
    <property type="project" value="UniProtKB-UniRule"/>
</dbReference>
<dbReference type="FunFam" id="3.100.10.10:FF:000005">
    <property type="entry name" value="50S ribosomal protein L15"/>
    <property type="match status" value="1"/>
</dbReference>
<dbReference type="Gene3D" id="3.100.10.10">
    <property type="match status" value="1"/>
</dbReference>
<dbReference type="HAMAP" id="MF_01341">
    <property type="entry name" value="Ribosomal_uL15"/>
    <property type="match status" value="1"/>
</dbReference>
<dbReference type="InterPro" id="IPR030878">
    <property type="entry name" value="Ribosomal_uL15"/>
</dbReference>
<dbReference type="InterPro" id="IPR021131">
    <property type="entry name" value="Ribosomal_uL15/eL18"/>
</dbReference>
<dbReference type="InterPro" id="IPR036227">
    <property type="entry name" value="Ribosomal_uL15/eL18_sf"/>
</dbReference>
<dbReference type="InterPro" id="IPR005749">
    <property type="entry name" value="Ribosomal_uL15_bac-type"/>
</dbReference>
<dbReference type="NCBIfam" id="TIGR01071">
    <property type="entry name" value="rplO_bact"/>
    <property type="match status" value="1"/>
</dbReference>
<dbReference type="PANTHER" id="PTHR12934">
    <property type="entry name" value="50S RIBOSOMAL PROTEIN L15"/>
    <property type="match status" value="1"/>
</dbReference>
<dbReference type="PANTHER" id="PTHR12934:SF11">
    <property type="entry name" value="LARGE RIBOSOMAL SUBUNIT PROTEIN UL15M"/>
    <property type="match status" value="1"/>
</dbReference>
<dbReference type="Pfam" id="PF00828">
    <property type="entry name" value="Ribosomal_L27A"/>
    <property type="match status" value="1"/>
</dbReference>
<dbReference type="SUPFAM" id="SSF52080">
    <property type="entry name" value="Ribosomal proteins L15p and L18e"/>
    <property type="match status" value="1"/>
</dbReference>
<comment type="function">
    <text evidence="1">Binds to the 23S rRNA.</text>
</comment>
<comment type="subunit">
    <text evidence="1">Part of the 50S ribosomal subunit.</text>
</comment>
<comment type="similarity">
    <text evidence="1">Belongs to the universal ribosomal protein uL15 family.</text>
</comment>
<keyword id="KW-0002">3D-structure</keyword>
<keyword id="KW-0687">Ribonucleoprotein</keyword>
<keyword id="KW-0689">Ribosomal protein</keyword>
<keyword id="KW-0694">RNA-binding</keyword>
<keyword id="KW-0699">rRNA-binding</keyword>
<gene>
    <name evidence="1" type="primary">rplO</name>
    <name type="ordered locus">PPA1842</name>
</gene>
<evidence type="ECO:0000255" key="1">
    <source>
        <dbReference type="HAMAP-Rule" id="MF_01341"/>
    </source>
</evidence>
<evidence type="ECO:0000256" key="2">
    <source>
        <dbReference type="SAM" id="MobiDB-lite"/>
    </source>
</evidence>
<evidence type="ECO:0000305" key="3"/>
<evidence type="ECO:0007829" key="4">
    <source>
        <dbReference type="PDB" id="8CVM"/>
    </source>
</evidence>
<proteinExistence type="evidence at protein level"/>